<dbReference type="EC" id="2.7.1.33" evidence="1"/>
<dbReference type="EMBL" id="CP000325">
    <property type="protein sequence ID" value="ABL02940.1"/>
    <property type="molecule type" value="Genomic_DNA"/>
</dbReference>
<dbReference type="RefSeq" id="WP_011738565.1">
    <property type="nucleotide sequence ID" value="NC_008611.1"/>
</dbReference>
<dbReference type="SMR" id="A0PKS1"/>
<dbReference type="GeneID" id="34341016"/>
<dbReference type="KEGG" id="mul:MUL_0189"/>
<dbReference type="eggNOG" id="COG0572">
    <property type="taxonomic scope" value="Bacteria"/>
</dbReference>
<dbReference type="HOGENOM" id="CLU_053818_1_1_11"/>
<dbReference type="UniPathway" id="UPA00241">
    <property type="reaction ID" value="UER00352"/>
</dbReference>
<dbReference type="Proteomes" id="UP000000765">
    <property type="component" value="Chromosome"/>
</dbReference>
<dbReference type="GO" id="GO:0005737">
    <property type="term" value="C:cytoplasm"/>
    <property type="evidence" value="ECO:0007669"/>
    <property type="project" value="UniProtKB-SubCell"/>
</dbReference>
<dbReference type="GO" id="GO:0005524">
    <property type="term" value="F:ATP binding"/>
    <property type="evidence" value="ECO:0007669"/>
    <property type="project" value="UniProtKB-UniRule"/>
</dbReference>
<dbReference type="GO" id="GO:0004594">
    <property type="term" value="F:pantothenate kinase activity"/>
    <property type="evidence" value="ECO:0007669"/>
    <property type="project" value="UniProtKB-UniRule"/>
</dbReference>
<dbReference type="GO" id="GO:0015937">
    <property type="term" value="P:coenzyme A biosynthetic process"/>
    <property type="evidence" value="ECO:0007669"/>
    <property type="project" value="UniProtKB-UniRule"/>
</dbReference>
<dbReference type="CDD" id="cd02025">
    <property type="entry name" value="PanK"/>
    <property type="match status" value="1"/>
</dbReference>
<dbReference type="FunFam" id="3.40.50.300:FF:000242">
    <property type="entry name" value="Pantothenate kinase"/>
    <property type="match status" value="1"/>
</dbReference>
<dbReference type="Gene3D" id="3.40.50.300">
    <property type="entry name" value="P-loop containing nucleotide triphosphate hydrolases"/>
    <property type="match status" value="1"/>
</dbReference>
<dbReference type="HAMAP" id="MF_00215">
    <property type="entry name" value="Pantothen_kinase_1"/>
    <property type="match status" value="1"/>
</dbReference>
<dbReference type="InterPro" id="IPR027417">
    <property type="entry name" value="P-loop_NTPase"/>
</dbReference>
<dbReference type="InterPro" id="IPR004566">
    <property type="entry name" value="PanK"/>
</dbReference>
<dbReference type="InterPro" id="IPR006083">
    <property type="entry name" value="PRK/URK"/>
</dbReference>
<dbReference type="NCBIfam" id="TIGR00554">
    <property type="entry name" value="panK_bact"/>
    <property type="match status" value="1"/>
</dbReference>
<dbReference type="PANTHER" id="PTHR10285">
    <property type="entry name" value="URIDINE KINASE"/>
    <property type="match status" value="1"/>
</dbReference>
<dbReference type="Pfam" id="PF00485">
    <property type="entry name" value="PRK"/>
    <property type="match status" value="1"/>
</dbReference>
<dbReference type="PIRSF" id="PIRSF000545">
    <property type="entry name" value="Pantothenate_kin"/>
    <property type="match status" value="1"/>
</dbReference>
<dbReference type="SUPFAM" id="SSF52540">
    <property type="entry name" value="P-loop containing nucleoside triphosphate hydrolases"/>
    <property type="match status" value="1"/>
</dbReference>
<sequence>MSRLSEPSPYVEFDRRQWRALRMSTPLALTEAELIGLRGLGEQIDLLEVEEVFLPLARLLHLQVAARQRLFAATAEFLGEPQQNPDRPVPFIIGVAGSVAVGKSTTARVLQALLARWDHHPRVDLVTTDGFLYPNAELERRNLMHRKGFPESYNRRALMRFVTSVKSGSDYACAPVYSHLHYNIIPGAKQVVRHPDILILEGLNVLQTGPTLMVSDLFDFSLYVDARIEDIEQWYVSRFLAMRSTAFANPESHFHHYSALPDPEAVVAAREIWRTINRPNLVENILPTRPRATLVLRKDADHSIKRLRLRKL</sequence>
<gene>
    <name evidence="1" type="primary">coaA</name>
    <name type="ordered locus">MUL_0189</name>
</gene>
<protein>
    <recommendedName>
        <fullName evidence="1">Pantothenate kinase</fullName>
        <ecNumber evidence="1">2.7.1.33</ecNumber>
    </recommendedName>
    <alternativeName>
        <fullName evidence="1">Pantothenic acid kinase</fullName>
    </alternativeName>
</protein>
<name>COAA_MYCUA</name>
<comment type="catalytic activity">
    <reaction evidence="1">
        <text>(R)-pantothenate + ATP = (R)-4'-phosphopantothenate + ADP + H(+)</text>
        <dbReference type="Rhea" id="RHEA:16373"/>
        <dbReference type="ChEBI" id="CHEBI:10986"/>
        <dbReference type="ChEBI" id="CHEBI:15378"/>
        <dbReference type="ChEBI" id="CHEBI:29032"/>
        <dbReference type="ChEBI" id="CHEBI:30616"/>
        <dbReference type="ChEBI" id="CHEBI:456216"/>
        <dbReference type="EC" id="2.7.1.33"/>
    </reaction>
</comment>
<comment type="pathway">
    <text evidence="1">Cofactor biosynthesis; coenzyme A biosynthesis; CoA from (R)-pantothenate: step 1/5.</text>
</comment>
<comment type="subcellular location">
    <subcellularLocation>
        <location evidence="1">Cytoplasm</location>
    </subcellularLocation>
</comment>
<comment type="similarity">
    <text evidence="1">Belongs to the prokaryotic pantothenate kinase family.</text>
</comment>
<reference key="1">
    <citation type="journal article" date="2007" name="Genome Res.">
        <title>Reductive evolution and niche adaptation inferred from the genome of Mycobacterium ulcerans, the causative agent of Buruli ulcer.</title>
        <authorList>
            <person name="Stinear T.P."/>
            <person name="Seemann T."/>
            <person name="Pidot S."/>
            <person name="Frigui W."/>
            <person name="Reysset G."/>
            <person name="Garnier T."/>
            <person name="Meurice G."/>
            <person name="Simon D."/>
            <person name="Bouchier C."/>
            <person name="Ma L."/>
            <person name="Tichit M."/>
            <person name="Porter J.L."/>
            <person name="Ryan J."/>
            <person name="Johnson P.D.R."/>
            <person name="Davies J.K."/>
            <person name="Jenkin G.A."/>
            <person name="Small P.L.C."/>
            <person name="Jones L.M."/>
            <person name="Tekaia F."/>
            <person name="Laval F."/>
            <person name="Daffe M."/>
            <person name="Parkhill J."/>
            <person name="Cole S.T."/>
        </authorList>
    </citation>
    <scope>NUCLEOTIDE SEQUENCE [LARGE SCALE GENOMIC DNA]</scope>
    <source>
        <strain>Agy99</strain>
    </source>
</reference>
<proteinExistence type="inferred from homology"/>
<accession>A0PKS1</accession>
<evidence type="ECO:0000255" key="1">
    <source>
        <dbReference type="HAMAP-Rule" id="MF_00215"/>
    </source>
</evidence>
<keyword id="KW-0067">ATP-binding</keyword>
<keyword id="KW-0173">Coenzyme A biosynthesis</keyword>
<keyword id="KW-0963">Cytoplasm</keyword>
<keyword id="KW-0418">Kinase</keyword>
<keyword id="KW-0547">Nucleotide-binding</keyword>
<keyword id="KW-0808">Transferase</keyword>
<feature type="chain" id="PRO_1000043233" description="Pantothenate kinase">
    <location>
        <begin position="1"/>
        <end position="312"/>
    </location>
</feature>
<feature type="binding site" evidence="1">
    <location>
        <begin position="97"/>
        <end position="104"/>
    </location>
    <ligand>
        <name>ATP</name>
        <dbReference type="ChEBI" id="CHEBI:30616"/>
    </ligand>
</feature>
<organism>
    <name type="scientific">Mycobacterium ulcerans (strain Agy99)</name>
    <dbReference type="NCBI Taxonomy" id="362242"/>
    <lineage>
        <taxon>Bacteria</taxon>
        <taxon>Bacillati</taxon>
        <taxon>Actinomycetota</taxon>
        <taxon>Actinomycetes</taxon>
        <taxon>Mycobacteriales</taxon>
        <taxon>Mycobacteriaceae</taxon>
        <taxon>Mycobacterium</taxon>
        <taxon>Mycobacterium ulcerans group</taxon>
    </lineage>
</organism>